<feature type="chain" id="PRO_1000012197" description="Lipoyl synthase">
    <location>
        <begin position="1"/>
        <end position="329"/>
    </location>
</feature>
<feature type="domain" description="Radical SAM core" evidence="2">
    <location>
        <begin position="87"/>
        <end position="305"/>
    </location>
</feature>
<feature type="region of interest" description="Disordered" evidence="3">
    <location>
        <begin position="1"/>
        <end position="23"/>
    </location>
</feature>
<feature type="binding site" evidence="1">
    <location>
        <position position="76"/>
    </location>
    <ligand>
        <name>[4Fe-4S] cluster</name>
        <dbReference type="ChEBI" id="CHEBI:49883"/>
        <label>1</label>
    </ligand>
</feature>
<feature type="binding site" evidence="1">
    <location>
        <position position="81"/>
    </location>
    <ligand>
        <name>[4Fe-4S] cluster</name>
        <dbReference type="ChEBI" id="CHEBI:49883"/>
        <label>1</label>
    </ligand>
</feature>
<feature type="binding site" evidence="1">
    <location>
        <position position="87"/>
    </location>
    <ligand>
        <name>[4Fe-4S] cluster</name>
        <dbReference type="ChEBI" id="CHEBI:49883"/>
        <label>1</label>
    </ligand>
</feature>
<feature type="binding site" evidence="1">
    <location>
        <position position="102"/>
    </location>
    <ligand>
        <name>[4Fe-4S] cluster</name>
        <dbReference type="ChEBI" id="CHEBI:49883"/>
        <label>2</label>
        <note>4Fe-4S-S-AdoMet</note>
    </ligand>
</feature>
<feature type="binding site" evidence="1">
    <location>
        <position position="106"/>
    </location>
    <ligand>
        <name>[4Fe-4S] cluster</name>
        <dbReference type="ChEBI" id="CHEBI:49883"/>
        <label>2</label>
        <note>4Fe-4S-S-AdoMet</note>
    </ligand>
</feature>
<feature type="binding site" evidence="1">
    <location>
        <position position="109"/>
    </location>
    <ligand>
        <name>[4Fe-4S] cluster</name>
        <dbReference type="ChEBI" id="CHEBI:49883"/>
        <label>2</label>
        <note>4Fe-4S-S-AdoMet</note>
    </ligand>
</feature>
<feature type="binding site" evidence="1">
    <location>
        <position position="316"/>
    </location>
    <ligand>
        <name>[4Fe-4S] cluster</name>
        <dbReference type="ChEBI" id="CHEBI:49883"/>
        <label>1</label>
    </ligand>
</feature>
<proteinExistence type="inferred from homology"/>
<keyword id="KW-0004">4Fe-4S</keyword>
<keyword id="KW-0963">Cytoplasm</keyword>
<keyword id="KW-0408">Iron</keyword>
<keyword id="KW-0411">Iron-sulfur</keyword>
<keyword id="KW-0479">Metal-binding</keyword>
<keyword id="KW-0949">S-adenosyl-L-methionine</keyword>
<keyword id="KW-0808">Transferase</keyword>
<evidence type="ECO:0000255" key="1">
    <source>
        <dbReference type="HAMAP-Rule" id="MF_00206"/>
    </source>
</evidence>
<evidence type="ECO:0000255" key="2">
    <source>
        <dbReference type="PROSITE-ProRule" id="PRU01266"/>
    </source>
</evidence>
<evidence type="ECO:0000256" key="3">
    <source>
        <dbReference type="SAM" id="MobiDB-lite"/>
    </source>
</evidence>
<name>LIPA_BURM7</name>
<reference key="1">
    <citation type="journal article" date="2010" name="Genome Biol. Evol.">
        <title>Continuing evolution of Burkholderia mallei through genome reduction and large-scale rearrangements.</title>
        <authorList>
            <person name="Losada L."/>
            <person name="Ronning C.M."/>
            <person name="DeShazer D."/>
            <person name="Woods D."/>
            <person name="Fedorova N."/>
            <person name="Kim H.S."/>
            <person name="Shabalina S.A."/>
            <person name="Pearson T.R."/>
            <person name="Brinkac L."/>
            <person name="Tan P."/>
            <person name="Nandi T."/>
            <person name="Crabtree J."/>
            <person name="Badger J."/>
            <person name="Beckstrom-Sternberg S."/>
            <person name="Saqib M."/>
            <person name="Schutzer S.E."/>
            <person name="Keim P."/>
            <person name="Nierman W.C."/>
        </authorList>
    </citation>
    <scope>NUCLEOTIDE SEQUENCE [LARGE SCALE GENOMIC DNA]</scope>
    <source>
        <strain>NCTC 10247</strain>
    </source>
</reference>
<gene>
    <name evidence="1" type="primary">lipA</name>
    <name type="ordered locus">BMA10247_3186</name>
</gene>
<sequence>MTDLTATPAPAEPAASAYDPTAKQKAQAKTARIPIKIVPIEKLKKPEWIRVKAATSSSRFNEIKTILREHNLHTVCEEASCPNIGECFGKGTATFMIMGDKCTRRCPFCDVGHGRPDPLDADEPKNLARTIAALKLKYVVITSVDRDDLRDGGAGHFVECIREVREQSPATRIEILTPDFRGRLDRALAILNAAPPDVMNHNLETVPRLYKEARPGSDYAHSLKLLKDFKALHPDVATKSGLMVGLGETTDEILQVMRDLRAHDVDMLTIGQYLQPSEHHLPVREYVHPDTFKMYEEEAYKMGFTHAAVGAMVRSSYHADLQAHGAGVV</sequence>
<protein>
    <recommendedName>
        <fullName evidence="1">Lipoyl synthase</fullName>
        <ecNumber evidence="1">2.8.1.8</ecNumber>
    </recommendedName>
    <alternativeName>
        <fullName evidence="1">Lip-syn</fullName>
        <shortName evidence="1">LS</shortName>
    </alternativeName>
    <alternativeName>
        <fullName evidence="1">Lipoate synthase</fullName>
    </alternativeName>
    <alternativeName>
        <fullName evidence="1">Lipoic acid synthase</fullName>
    </alternativeName>
    <alternativeName>
        <fullName evidence="1">Sulfur insertion protein LipA</fullName>
    </alternativeName>
</protein>
<dbReference type="EC" id="2.8.1.8" evidence="1"/>
<dbReference type="EMBL" id="CP000548">
    <property type="protein sequence ID" value="ABO04139.1"/>
    <property type="molecule type" value="Genomic_DNA"/>
</dbReference>
<dbReference type="RefSeq" id="WP_004189177.1">
    <property type="nucleotide sequence ID" value="NZ_CP007802.1"/>
</dbReference>
<dbReference type="SMR" id="A3MR17"/>
<dbReference type="GeneID" id="92977834"/>
<dbReference type="KEGG" id="bmaz:BM44_181"/>
<dbReference type="KEGG" id="bmn:BMA10247_3186"/>
<dbReference type="PATRIC" id="fig|320389.8.peg.193"/>
<dbReference type="UniPathway" id="UPA00538">
    <property type="reaction ID" value="UER00593"/>
</dbReference>
<dbReference type="GO" id="GO:0005737">
    <property type="term" value="C:cytoplasm"/>
    <property type="evidence" value="ECO:0007669"/>
    <property type="project" value="UniProtKB-SubCell"/>
</dbReference>
<dbReference type="GO" id="GO:0051539">
    <property type="term" value="F:4 iron, 4 sulfur cluster binding"/>
    <property type="evidence" value="ECO:0007669"/>
    <property type="project" value="UniProtKB-UniRule"/>
</dbReference>
<dbReference type="GO" id="GO:0016992">
    <property type="term" value="F:lipoate synthase activity"/>
    <property type="evidence" value="ECO:0007669"/>
    <property type="project" value="UniProtKB-UniRule"/>
</dbReference>
<dbReference type="GO" id="GO:0046872">
    <property type="term" value="F:metal ion binding"/>
    <property type="evidence" value="ECO:0007669"/>
    <property type="project" value="UniProtKB-KW"/>
</dbReference>
<dbReference type="CDD" id="cd01335">
    <property type="entry name" value="Radical_SAM"/>
    <property type="match status" value="1"/>
</dbReference>
<dbReference type="FunFam" id="3.20.20.70:FF:000040">
    <property type="entry name" value="Lipoyl synthase"/>
    <property type="match status" value="1"/>
</dbReference>
<dbReference type="Gene3D" id="3.20.20.70">
    <property type="entry name" value="Aldolase class I"/>
    <property type="match status" value="1"/>
</dbReference>
<dbReference type="HAMAP" id="MF_00206">
    <property type="entry name" value="Lipoyl_synth"/>
    <property type="match status" value="1"/>
</dbReference>
<dbReference type="InterPro" id="IPR013785">
    <property type="entry name" value="Aldolase_TIM"/>
</dbReference>
<dbReference type="InterPro" id="IPR006638">
    <property type="entry name" value="Elp3/MiaA/NifB-like_rSAM"/>
</dbReference>
<dbReference type="InterPro" id="IPR031691">
    <property type="entry name" value="LIAS_N"/>
</dbReference>
<dbReference type="InterPro" id="IPR003698">
    <property type="entry name" value="Lipoyl_synth"/>
</dbReference>
<dbReference type="InterPro" id="IPR007197">
    <property type="entry name" value="rSAM"/>
</dbReference>
<dbReference type="NCBIfam" id="TIGR00510">
    <property type="entry name" value="lipA"/>
    <property type="match status" value="1"/>
</dbReference>
<dbReference type="NCBIfam" id="NF004019">
    <property type="entry name" value="PRK05481.1"/>
    <property type="match status" value="1"/>
</dbReference>
<dbReference type="NCBIfam" id="NF009544">
    <property type="entry name" value="PRK12928.1"/>
    <property type="match status" value="1"/>
</dbReference>
<dbReference type="PANTHER" id="PTHR10949">
    <property type="entry name" value="LIPOYL SYNTHASE"/>
    <property type="match status" value="1"/>
</dbReference>
<dbReference type="PANTHER" id="PTHR10949:SF0">
    <property type="entry name" value="LIPOYL SYNTHASE, MITOCHONDRIAL"/>
    <property type="match status" value="1"/>
</dbReference>
<dbReference type="Pfam" id="PF16881">
    <property type="entry name" value="LIAS_N"/>
    <property type="match status" value="1"/>
</dbReference>
<dbReference type="Pfam" id="PF04055">
    <property type="entry name" value="Radical_SAM"/>
    <property type="match status" value="1"/>
</dbReference>
<dbReference type="PIRSF" id="PIRSF005963">
    <property type="entry name" value="Lipoyl_synth"/>
    <property type="match status" value="1"/>
</dbReference>
<dbReference type="SFLD" id="SFLDF00271">
    <property type="entry name" value="lipoyl_synthase"/>
    <property type="match status" value="1"/>
</dbReference>
<dbReference type="SFLD" id="SFLDG01058">
    <property type="entry name" value="lipoyl_synthase_like"/>
    <property type="match status" value="1"/>
</dbReference>
<dbReference type="SMART" id="SM00729">
    <property type="entry name" value="Elp3"/>
    <property type="match status" value="1"/>
</dbReference>
<dbReference type="SUPFAM" id="SSF102114">
    <property type="entry name" value="Radical SAM enzymes"/>
    <property type="match status" value="1"/>
</dbReference>
<dbReference type="PROSITE" id="PS51918">
    <property type="entry name" value="RADICAL_SAM"/>
    <property type="match status" value="1"/>
</dbReference>
<comment type="function">
    <text evidence="1">Catalyzes the radical-mediated insertion of two sulfur atoms into the C-6 and C-8 positions of the octanoyl moiety bound to the lipoyl domains of lipoate-dependent enzymes, thereby converting the octanoylated domains into lipoylated derivatives.</text>
</comment>
<comment type="catalytic activity">
    <reaction evidence="1">
        <text>[[Fe-S] cluster scaffold protein carrying a second [4Fe-4S](2+) cluster] + N(6)-octanoyl-L-lysyl-[protein] + 2 oxidized [2Fe-2S]-[ferredoxin] + 2 S-adenosyl-L-methionine + 4 H(+) = [[Fe-S] cluster scaffold protein] + N(6)-[(R)-dihydrolipoyl]-L-lysyl-[protein] + 4 Fe(3+) + 2 hydrogen sulfide + 2 5'-deoxyadenosine + 2 L-methionine + 2 reduced [2Fe-2S]-[ferredoxin]</text>
        <dbReference type="Rhea" id="RHEA:16585"/>
        <dbReference type="Rhea" id="RHEA-COMP:9928"/>
        <dbReference type="Rhea" id="RHEA-COMP:10000"/>
        <dbReference type="Rhea" id="RHEA-COMP:10001"/>
        <dbReference type="Rhea" id="RHEA-COMP:10475"/>
        <dbReference type="Rhea" id="RHEA-COMP:14568"/>
        <dbReference type="Rhea" id="RHEA-COMP:14569"/>
        <dbReference type="ChEBI" id="CHEBI:15378"/>
        <dbReference type="ChEBI" id="CHEBI:17319"/>
        <dbReference type="ChEBI" id="CHEBI:29034"/>
        <dbReference type="ChEBI" id="CHEBI:29919"/>
        <dbReference type="ChEBI" id="CHEBI:33722"/>
        <dbReference type="ChEBI" id="CHEBI:33737"/>
        <dbReference type="ChEBI" id="CHEBI:33738"/>
        <dbReference type="ChEBI" id="CHEBI:57844"/>
        <dbReference type="ChEBI" id="CHEBI:59789"/>
        <dbReference type="ChEBI" id="CHEBI:78809"/>
        <dbReference type="ChEBI" id="CHEBI:83100"/>
        <dbReference type="EC" id="2.8.1.8"/>
    </reaction>
</comment>
<comment type="cofactor">
    <cofactor evidence="1">
        <name>[4Fe-4S] cluster</name>
        <dbReference type="ChEBI" id="CHEBI:49883"/>
    </cofactor>
    <text evidence="1">Binds 2 [4Fe-4S] clusters per subunit. One cluster is coordinated with 3 cysteines and an exchangeable S-adenosyl-L-methionine.</text>
</comment>
<comment type="pathway">
    <text evidence="1">Protein modification; protein lipoylation via endogenous pathway; protein N(6)-(lipoyl)lysine from octanoyl-[acyl-carrier-protein]: step 2/2.</text>
</comment>
<comment type="subcellular location">
    <subcellularLocation>
        <location evidence="1">Cytoplasm</location>
    </subcellularLocation>
</comment>
<comment type="similarity">
    <text evidence="1">Belongs to the radical SAM superfamily. Lipoyl synthase family.</text>
</comment>
<organism>
    <name type="scientific">Burkholderia mallei (strain NCTC 10247)</name>
    <dbReference type="NCBI Taxonomy" id="320389"/>
    <lineage>
        <taxon>Bacteria</taxon>
        <taxon>Pseudomonadati</taxon>
        <taxon>Pseudomonadota</taxon>
        <taxon>Betaproteobacteria</taxon>
        <taxon>Burkholderiales</taxon>
        <taxon>Burkholderiaceae</taxon>
        <taxon>Burkholderia</taxon>
        <taxon>pseudomallei group</taxon>
    </lineage>
</organism>
<accession>A3MR17</accession>